<reference key="1">
    <citation type="journal article" date="2007" name="PLoS Genet.">
        <title>The complete genome sequence of Yersinia pseudotuberculosis IP31758, the causative agent of Far East scarlet-like fever.</title>
        <authorList>
            <person name="Eppinger M."/>
            <person name="Rosovitz M.J."/>
            <person name="Fricke W.F."/>
            <person name="Rasko D.A."/>
            <person name="Kokorina G."/>
            <person name="Fayolle C."/>
            <person name="Lindler L.E."/>
            <person name="Carniel E."/>
            <person name="Ravel J."/>
        </authorList>
    </citation>
    <scope>NUCLEOTIDE SEQUENCE [LARGE SCALE GENOMIC DNA]</scope>
    <source>
        <strain>IP 31758</strain>
    </source>
</reference>
<feature type="chain" id="PRO_1000061062" description="L-rhamnose isomerase">
    <location>
        <begin position="1"/>
        <end position="418"/>
    </location>
</feature>
<feature type="binding site" evidence="1">
    <location>
        <position position="262"/>
    </location>
    <ligand>
        <name>Mn(2+)</name>
        <dbReference type="ChEBI" id="CHEBI:29035"/>
    </ligand>
</feature>
<feature type="binding site" evidence="1">
    <location>
        <position position="294"/>
    </location>
    <ligand>
        <name>Mn(2+)</name>
        <dbReference type="ChEBI" id="CHEBI:29035"/>
    </ligand>
</feature>
<feature type="binding site" evidence="1">
    <location>
        <position position="296"/>
    </location>
    <ligand>
        <name>Mn(2+)</name>
        <dbReference type="ChEBI" id="CHEBI:29035"/>
    </ligand>
</feature>
<gene>
    <name evidence="1" type="primary">rhaA</name>
    <name type="ordered locus">YpsIP31758_3756</name>
</gene>
<protein>
    <recommendedName>
        <fullName evidence="1">L-rhamnose isomerase</fullName>
        <ecNumber evidence="1">5.3.1.14</ecNumber>
    </recommendedName>
</protein>
<comment type="function">
    <text evidence="1">Catalyzes the interconversion of L-rhamnose and L-rhamnulose.</text>
</comment>
<comment type="catalytic activity">
    <reaction evidence="1">
        <text>L-rhamnopyranose = L-rhamnulose</text>
        <dbReference type="Rhea" id="RHEA:23160"/>
        <dbReference type="ChEBI" id="CHEBI:17897"/>
        <dbReference type="ChEBI" id="CHEBI:62346"/>
        <dbReference type="EC" id="5.3.1.14"/>
    </reaction>
</comment>
<comment type="cofactor">
    <cofactor evidence="1">
        <name>Mn(2+)</name>
        <dbReference type="ChEBI" id="CHEBI:29035"/>
    </cofactor>
    <text evidence="1">Binds 1 Mn(2+) ion per subunit.</text>
</comment>
<comment type="pathway">
    <text evidence="1">Carbohydrate degradation; L-rhamnose degradation; glycerone phosphate from L-rhamnose: step 1/3.</text>
</comment>
<comment type="subunit">
    <text evidence="1">Homotetramer.</text>
</comment>
<comment type="subcellular location">
    <subcellularLocation>
        <location evidence="1">Cytoplasm</location>
    </subcellularLocation>
</comment>
<comment type="similarity">
    <text evidence="1">Belongs to the rhamnose isomerase family.</text>
</comment>
<keyword id="KW-0963">Cytoplasm</keyword>
<keyword id="KW-0413">Isomerase</keyword>
<keyword id="KW-0464">Manganese</keyword>
<keyword id="KW-0479">Metal-binding</keyword>
<keyword id="KW-0684">Rhamnose metabolism</keyword>
<name>RHAA_YERP3</name>
<evidence type="ECO:0000255" key="1">
    <source>
        <dbReference type="HAMAP-Rule" id="MF_00541"/>
    </source>
</evidence>
<sequence length="418" mass="47174">MTNSIEQAWDLAKQRFAAVGVDVDAALTRLDTLPVSMHCWQGDDVTGFEDPDGVLTGGIQATGNYPGKARNATELRSDLELALALIPGPKRLNLHAIYLESDTPVARNKIEPRHFSHWVAWAKKHQLGLDFNPSCFSHPLSADGFTLSHADPEIRQFWIEHCQASRRISAYFGEQLGTPSVMNIWIPDGMKDTPIDRLAPRQRLLSALDEVISEKLNPAHHIDAVESKLFGIGAESYTVGSNEFYMGYAASRQTALCLDAGHFHPTEVISDKISSAMLYVPRLLLHVSRPVRWDSDHVVLLDDETQAIASEIIRHNLFDRVHIGLDFFDASINRIAAWVIGTRNMKKALLRALLEPTDRLRQLELRGDYTARLALLEEQKSLPWQAIWEGYCQRNDVPVDARWLDAVREYEQQILSQR</sequence>
<accession>A7FN82</accession>
<proteinExistence type="inferred from homology"/>
<dbReference type="EC" id="5.3.1.14" evidence="1"/>
<dbReference type="EMBL" id="CP000720">
    <property type="protein sequence ID" value="ABS46575.1"/>
    <property type="molecule type" value="Genomic_DNA"/>
</dbReference>
<dbReference type="RefSeq" id="WP_012105828.1">
    <property type="nucleotide sequence ID" value="NC_009708.1"/>
</dbReference>
<dbReference type="SMR" id="A7FN82"/>
<dbReference type="KEGG" id="ypi:YpsIP31758_3756"/>
<dbReference type="HOGENOM" id="CLU_052790_0_0_6"/>
<dbReference type="UniPathway" id="UPA00541">
    <property type="reaction ID" value="UER00601"/>
</dbReference>
<dbReference type="Proteomes" id="UP000002412">
    <property type="component" value="Chromosome"/>
</dbReference>
<dbReference type="GO" id="GO:0005737">
    <property type="term" value="C:cytoplasm"/>
    <property type="evidence" value="ECO:0007669"/>
    <property type="project" value="UniProtKB-SubCell"/>
</dbReference>
<dbReference type="GO" id="GO:0008740">
    <property type="term" value="F:L-rhamnose isomerase activity"/>
    <property type="evidence" value="ECO:0007669"/>
    <property type="project" value="UniProtKB-UniRule"/>
</dbReference>
<dbReference type="GO" id="GO:0030145">
    <property type="term" value="F:manganese ion binding"/>
    <property type="evidence" value="ECO:0007669"/>
    <property type="project" value="UniProtKB-UniRule"/>
</dbReference>
<dbReference type="GO" id="GO:0019324">
    <property type="term" value="P:L-lyxose metabolic process"/>
    <property type="evidence" value="ECO:0007669"/>
    <property type="project" value="TreeGrafter"/>
</dbReference>
<dbReference type="GO" id="GO:0019301">
    <property type="term" value="P:rhamnose catabolic process"/>
    <property type="evidence" value="ECO:0007669"/>
    <property type="project" value="UniProtKB-UniRule"/>
</dbReference>
<dbReference type="FunFam" id="3.20.20.150:FF:000006">
    <property type="entry name" value="L-rhamnose isomerase"/>
    <property type="match status" value="1"/>
</dbReference>
<dbReference type="Gene3D" id="3.20.20.150">
    <property type="entry name" value="Divalent-metal-dependent TIM barrel enzymes"/>
    <property type="match status" value="1"/>
</dbReference>
<dbReference type="HAMAP" id="MF_00541">
    <property type="entry name" value="RhaA"/>
    <property type="match status" value="1"/>
</dbReference>
<dbReference type="InterPro" id="IPR050337">
    <property type="entry name" value="L-rhamnose_isomerase"/>
</dbReference>
<dbReference type="InterPro" id="IPR009308">
    <property type="entry name" value="Rhamnose_isomerase"/>
</dbReference>
<dbReference type="InterPro" id="IPR036237">
    <property type="entry name" value="Xyl_isomerase-like_sf"/>
</dbReference>
<dbReference type="NCBIfam" id="NF002203">
    <property type="entry name" value="PRK01076.1"/>
    <property type="match status" value="1"/>
</dbReference>
<dbReference type="NCBIfam" id="TIGR01748">
    <property type="entry name" value="rhaA"/>
    <property type="match status" value="1"/>
</dbReference>
<dbReference type="PANTHER" id="PTHR30268">
    <property type="entry name" value="L-RHAMNOSE ISOMERASE"/>
    <property type="match status" value="1"/>
</dbReference>
<dbReference type="PANTHER" id="PTHR30268:SF0">
    <property type="entry name" value="L-RHAMNOSE ISOMERASE"/>
    <property type="match status" value="1"/>
</dbReference>
<dbReference type="Pfam" id="PF06134">
    <property type="entry name" value="RhaA"/>
    <property type="match status" value="1"/>
</dbReference>
<dbReference type="SUPFAM" id="SSF51658">
    <property type="entry name" value="Xylose isomerase-like"/>
    <property type="match status" value="1"/>
</dbReference>
<organism>
    <name type="scientific">Yersinia pseudotuberculosis serotype O:1b (strain IP 31758)</name>
    <dbReference type="NCBI Taxonomy" id="349747"/>
    <lineage>
        <taxon>Bacteria</taxon>
        <taxon>Pseudomonadati</taxon>
        <taxon>Pseudomonadota</taxon>
        <taxon>Gammaproteobacteria</taxon>
        <taxon>Enterobacterales</taxon>
        <taxon>Yersiniaceae</taxon>
        <taxon>Yersinia</taxon>
    </lineage>
</organism>